<keyword id="KW-0963">Cytoplasm</keyword>
<keyword id="KW-0251">Elongation factor</keyword>
<keyword id="KW-0342">GTP-binding</keyword>
<keyword id="KW-0378">Hydrolase</keyword>
<keyword id="KW-0460">Magnesium</keyword>
<keyword id="KW-0479">Metal-binding</keyword>
<keyword id="KW-0547">Nucleotide-binding</keyword>
<keyword id="KW-0648">Protein biosynthesis</keyword>
<comment type="function">
    <text evidence="2">GTP hydrolase that promotes the GTP-dependent binding of aminoacyl-tRNA to the A-site of ribosomes during protein biosynthesis.</text>
</comment>
<comment type="catalytic activity">
    <reaction evidence="2">
        <text>GTP + H2O = GDP + phosphate + H(+)</text>
        <dbReference type="Rhea" id="RHEA:19669"/>
        <dbReference type="ChEBI" id="CHEBI:15377"/>
        <dbReference type="ChEBI" id="CHEBI:15378"/>
        <dbReference type="ChEBI" id="CHEBI:37565"/>
        <dbReference type="ChEBI" id="CHEBI:43474"/>
        <dbReference type="ChEBI" id="CHEBI:58189"/>
        <dbReference type="EC" id="3.6.5.3"/>
    </reaction>
    <physiologicalReaction direction="left-to-right" evidence="2">
        <dbReference type="Rhea" id="RHEA:19670"/>
    </physiologicalReaction>
</comment>
<comment type="subunit">
    <text evidence="2">Monomer.</text>
</comment>
<comment type="subcellular location">
    <subcellularLocation>
        <location evidence="2">Cytoplasm</location>
    </subcellularLocation>
</comment>
<comment type="similarity">
    <text evidence="2">Belongs to the TRAFAC class translation factor GTPase superfamily. Classic translation factor GTPase family. EF-Tu/EF-1A subfamily.</text>
</comment>
<evidence type="ECO:0000250" key="1"/>
<evidence type="ECO:0000255" key="2">
    <source>
        <dbReference type="HAMAP-Rule" id="MF_00118"/>
    </source>
</evidence>
<reference key="1">
    <citation type="journal article" date="1998" name="Electrophoresis">
        <title>Bacterial phylogeny based on comparative sequence analysis.</title>
        <authorList>
            <person name="Ludwig W."/>
            <person name="Strunk O."/>
            <person name="Klugbauer S."/>
            <person name="Klugbauer N."/>
            <person name="Weizenegger M."/>
            <person name="Neumaier J."/>
            <person name="Bachleitner M."/>
            <person name="Schleifer K.H."/>
        </authorList>
    </citation>
    <scope>NUCLEOTIDE SEQUENCE [GENOMIC DNA]</scope>
    <source>
        <strain>ATCC 49647 / DSM 5733 / H21</strain>
    </source>
</reference>
<protein>
    <recommendedName>
        <fullName evidence="2">Elongation factor Tu</fullName>
        <shortName evidence="2">EF-Tu</shortName>
        <ecNumber evidence="2">3.6.5.3</ecNumber>
    </recommendedName>
</protein>
<proteinExistence type="inferred from homology"/>
<dbReference type="EC" id="3.6.5.3" evidence="2"/>
<dbReference type="EMBL" id="Y15788">
    <property type="protein sequence ID" value="CAA75782.1"/>
    <property type="molecule type" value="Genomic_DNA"/>
</dbReference>
<dbReference type="SMR" id="O50340"/>
<dbReference type="STRING" id="2423.NA23_07135"/>
<dbReference type="eggNOG" id="COG0050">
    <property type="taxonomic scope" value="Bacteria"/>
</dbReference>
<dbReference type="GO" id="GO:0005829">
    <property type="term" value="C:cytosol"/>
    <property type="evidence" value="ECO:0007669"/>
    <property type="project" value="TreeGrafter"/>
</dbReference>
<dbReference type="GO" id="GO:0005525">
    <property type="term" value="F:GTP binding"/>
    <property type="evidence" value="ECO:0007669"/>
    <property type="project" value="UniProtKB-UniRule"/>
</dbReference>
<dbReference type="GO" id="GO:0003924">
    <property type="term" value="F:GTPase activity"/>
    <property type="evidence" value="ECO:0007669"/>
    <property type="project" value="InterPro"/>
</dbReference>
<dbReference type="GO" id="GO:0003746">
    <property type="term" value="F:translation elongation factor activity"/>
    <property type="evidence" value="ECO:0007669"/>
    <property type="project" value="UniProtKB-UniRule"/>
</dbReference>
<dbReference type="CDD" id="cd01884">
    <property type="entry name" value="EF_Tu"/>
    <property type="match status" value="1"/>
</dbReference>
<dbReference type="CDD" id="cd03697">
    <property type="entry name" value="EFTU_II"/>
    <property type="match status" value="1"/>
</dbReference>
<dbReference type="CDD" id="cd03707">
    <property type="entry name" value="EFTU_III"/>
    <property type="match status" value="1"/>
</dbReference>
<dbReference type="FunFam" id="2.40.30.10:FF:000001">
    <property type="entry name" value="Elongation factor Tu"/>
    <property type="match status" value="1"/>
</dbReference>
<dbReference type="FunFam" id="3.40.50.300:FF:000003">
    <property type="entry name" value="Elongation factor Tu"/>
    <property type="match status" value="1"/>
</dbReference>
<dbReference type="Gene3D" id="3.40.50.300">
    <property type="entry name" value="P-loop containing nucleotide triphosphate hydrolases"/>
    <property type="match status" value="1"/>
</dbReference>
<dbReference type="Gene3D" id="2.40.30.10">
    <property type="entry name" value="Translation factors"/>
    <property type="match status" value="2"/>
</dbReference>
<dbReference type="HAMAP" id="MF_00118_B">
    <property type="entry name" value="EF_Tu_B"/>
    <property type="match status" value="1"/>
</dbReference>
<dbReference type="InterPro" id="IPR041709">
    <property type="entry name" value="EF-Tu_GTP-bd"/>
</dbReference>
<dbReference type="InterPro" id="IPR050055">
    <property type="entry name" value="EF-Tu_GTPase"/>
</dbReference>
<dbReference type="InterPro" id="IPR004161">
    <property type="entry name" value="EFTu-like_2"/>
</dbReference>
<dbReference type="InterPro" id="IPR033720">
    <property type="entry name" value="EFTU_2"/>
</dbReference>
<dbReference type="InterPro" id="IPR031157">
    <property type="entry name" value="G_TR_CS"/>
</dbReference>
<dbReference type="InterPro" id="IPR027417">
    <property type="entry name" value="P-loop_NTPase"/>
</dbReference>
<dbReference type="InterPro" id="IPR005225">
    <property type="entry name" value="Small_GTP-bd"/>
</dbReference>
<dbReference type="InterPro" id="IPR000795">
    <property type="entry name" value="T_Tr_GTP-bd_dom"/>
</dbReference>
<dbReference type="InterPro" id="IPR009000">
    <property type="entry name" value="Transl_B-barrel_sf"/>
</dbReference>
<dbReference type="InterPro" id="IPR009001">
    <property type="entry name" value="Transl_elong_EF1A/Init_IF2_C"/>
</dbReference>
<dbReference type="InterPro" id="IPR004541">
    <property type="entry name" value="Transl_elong_EFTu/EF1A_bac/org"/>
</dbReference>
<dbReference type="InterPro" id="IPR004160">
    <property type="entry name" value="Transl_elong_EFTu/EF1A_C"/>
</dbReference>
<dbReference type="NCBIfam" id="TIGR00485">
    <property type="entry name" value="EF-Tu"/>
    <property type="match status" value="1"/>
</dbReference>
<dbReference type="NCBIfam" id="NF000766">
    <property type="entry name" value="PRK00049.1"/>
    <property type="match status" value="1"/>
</dbReference>
<dbReference type="NCBIfam" id="NF009372">
    <property type="entry name" value="PRK12735.1"/>
    <property type="match status" value="1"/>
</dbReference>
<dbReference type="NCBIfam" id="NF009373">
    <property type="entry name" value="PRK12736.1"/>
    <property type="match status" value="1"/>
</dbReference>
<dbReference type="NCBIfam" id="TIGR00231">
    <property type="entry name" value="small_GTP"/>
    <property type="match status" value="1"/>
</dbReference>
<dbReference type="PANTHER" id="PTHR43721:SF22">
    <property type="entry name" value="ELONGATION FACTOR TU, MITOCHONDRIAL"/>
    <property type="match status" value="1"/>
</dbReference>
<dbReference type="PANTHER" id="PTHR43721">
    <property type="entry name" value="ELONGATION FACTOR TU-RELATED"/>
    <property type="match status" value="1"/>
</dbReference>
<dbReference type="Pfam" id="PF00009">
    <property type="entry name" value="GTP_EFTU"/>
    <property type="match status" value="1"/>
</dbReference>
<dbReference type="Pfam" id="PF03144">
    <property type="entry name" value="GTP_EFTU_D2"/>
    <property type="match status" value="1"/>
</dbReference>
<dbReference type="Pfam" id="PF03143">
    <property type="entry name" value="GTP_EFTU_D3"/>
    <property type="match status" value="1"/>
</dbReference>
<dbReference type="PRINTS" id="PR00315">
    <property type="entry name" value="ELONGATNFCT"/>
</dbReference>
<dbReference type="SUPFAM" id="SSF50465">
    <property type="entry name" value="EF-Tu/eEF-1alpha/eIF2-gamma C-terminal domain"/>
    <property type="match status" value="1"/>
</dbReference>
<dbReference type="SUPFAM" id="SSF52540">
    <property type="entry name" value="P-loop containing nucleoside triphosphate hydrolases"/>
    <property type="match status" value="1"/>
</dbReference>
<dbReference type="SUPFAM" id="SSF50447">
    <property type="entry name" value="Translation proteins"/>
    <property type="match status" value="1"/>
</dbReference>
<dbReference type="PROSITE" id="PS00301">
    <property type="entry name" value="G_TR_1"/>
    <property type="match status" value="1"/>
</dbReference>
<dbReference type="PROSITE" id="PS51722">
    <property type="entry name" value="G_TR_2"/>
    <property type="match status" value="1"/>
</dbReference>
<feature type="chain" id="PRO_0000091324" description="Elongation factor Tu">
    <location>
        <begin position="1"/>
        <end position="399"/>
    </location>
</feature>
<feature type="domain" description="tr-type G">
    <location>
        <begin position="10"/>
        <end position="207"/>
    </location>
</feature>
<feature type="region of interest" description="G1" evidence="1">
    <location>
        <begin position="19"/>
        <end position="26"/>
    </location>
</feature>
<feature type="region of interest" description="G2" evidence="1">
    <location>
        <begin position="60"/>
        <end position="64"/>
    </location>
</feature>
<feature type="region of interest" description="G3" evidence="1">
    <location>
        <begin position="81"/>
        <end position="84"/>
    </location>
</feature>
<feature type="region of interest" description="G4" evidence="1">
    <location>
        <begin position="136"/>
        <end position="139"/>
    </location>
</feature>
<feature type="region of interest" description="G5" evidence="1">
    <location>
        <begin position="173"/>
        <end position="175"/>
    </location>
</feature>
<feature type="binding site" evidence="2">
    <location>
        <begin position="19"/>
        <end position="26"/>
    </location>
    <ligand>
        <name>GTP</name>
        <dbReference type="ChEBI" id="CHEBI:37565"/>
    </ligand>
</feature>
<feature type="binding site" evidence="2">
    <location>
        <position position="26"/>
    </location>
    <ligand>
        <name>Mg(2+)</name>
        <dbReference type="ChEBI" id="CHEBI:18420"/>
    </ligand>
</feature>
<feature type="binding site" evidence="2">
    <location>
        <begin position="81"/>
        <end position="85"/>
    </location>
    <ligand>
        <name>GTP</name>
        <dbReference type="ChEBI" id="CHEBI:37565"/>
    </ligand>
</feature>
<feature type="binding site" evidence="2">
    <location>
        <begin position="136"/>
        <end position="139"/>
    </location>
    <ligand>
        <name>GTP</name>
        <dbReference type="ChEBI" id="CHEBI:37565"/>
    </ligand>
</feature>
<accession>O50340</accession>
<name>EFTU_FERIS</name>
<gene>
    <name evidence="2" type="primary">tuf</name>
</gene>
<sequence length="399" mass="44145">MAKVTFVRTKPHMNVGTIGQIDHGKTTLTAAITKYCSFFGWADYTPYEMIDKAPEERARGITINITHVEYQTEKRHYAHIDCPGHADYIKNMITGAAQMDGAILVLAATDGPMPQTREHVLLARQVNVPAMIVFINKVDMVDPELVDLVEMEVRDLLSKYEFPGDEVPVVRGSALKAIEAPNDPNDPAYKPIKELLDAMDTYFPDPVREVDKPFLMPIEDVFSITGRGTVVTGRIERGVIKPGVEAEIIGMSYEIKKTVITSVEMFRKELDEAIAGDNVGCLLRGSSKDEVERGQVLAKPGSITPLKKFKANIYVLKKEEGGRHTPFTKGYKPQFYIRTADVTGEIVDLPAGVEMVMPGDNVEMTIELIYPVAIEKGMRFAVREGGRTVGAGVVSEIIE</sequence>
<organism>
    <name type="scientific">Fervidobacterium islandicum</name>
    <dbReference type="NCBI Taxonomy" id="2423"/>
    <lineage>
        <taxon>Bacteria</taxon>
        <taxon>Thermotogati</taxon>
        <taxon>Thermotogota</taxon>
        <taxon>Thermotogae</taxon>
        <taxon>Thermotogales</taxon>
        <taxon>Fervidobacteriaceae</taxon>
        <taxon>Fervidobacterium</taxon>
    </lineage>
</organism>